<gene>
    <name evidence="2" type="primary">Por</name>
</gene>
<proteinExistence type="evidence at transcript level"/>
<name>NCPR_CAVPO</name>
<sequence>MGDSHVDTGATSTEAVAEEVSLFSMTDMILLSVLVGFLTYFFLFRKKKEEIPEFTKISTTTSSVKESSFVEKMKKTGRNIIVFYGSQTGTAEEFANRLSKDAHRYGMRGMAADPEEYDLADLSSLPEIDNSLAVFCMATYGEGDPTDNAQDFYDWLQETDLDLSGVKYAVFGLGNKTYEHFNSMGKYVDQRLEQLGAQRIFELGLGDDDGNLEEDFITWREQFWPAVCEFFGVEATGEESSIRQYELVLHADTDPAKVYTGEMGRLKSYENQKPPFDAKNPFLAAVTTNRKLNQGTERHLMHLELDISDSKIRYESGDHVAVYPANDSNLVNQLGKILGADLDVVMSLKNLDEESNKKHPFPCPTTYRTALTYYLDITNPPRTNVLYELAQYASEPSEQEQLHKMASSSGEGKELYLTWVVEARRHILAILQDYPSLRPPIDHLCELLPRLQARYYSIASSSKVHPNSVHICAVVVEYETKSGRINKGVATSWLQAKDPAGENGRRALVPMFVRKSQFRLPFKSTTPVIMVGPGTGVAPFIGFIQERAWLQQQGKEVGETLLYYGCRRSDEDYLYREELAQFHKDGTLTQLNVAFSREQAQKVYVQHLLKRDQEHLWKLIHEDGAHIYVCGDARNMARDVQNTFCNIAAELGGMEHTQAVDYVKKLMTKGRYSLDVWS</sequence>
<protein>
    <recommendedName>
        <fullName evidence="2">NADPH--cytochrome P450 reductase</fullName>
        <shortName evidence="2">CPR</shortName>
        <shortName evidence="2">P450R</shortName>
        <ecNumber evidence="2">1.6.2.4</ecNumber>
    </recommendedName>
</protein>
<comment type="function">
    <text evidence="2">This enzyme is required for electron transfer from NADP to cytochrome P450 in microsomes. It can also provide electron transfer to heme oxygenase and cytochrome B5.</text>
</comment>
<comment type="catalytic activity">
    <reaction evidence="2">
        <text>2 oxidized [cytochrome P450] + NADPH = 2 reduced [cytochrome P450] + NADP(+) + H(+)</text>
        <dbReference type="Rhea" id="RHEA:24040"/>
        <dbReference type="Rhea" id="RHEA-COMP:14627"/>
        <dbReference type="Rhea" id="RHEA-COMP:14628"/>
        <dbReference type="ChEBI" id="CHEBI:15378"/>
        <dbReference type="ChEBI" id="CHEBI:55376"/>
        <dbReference type="ChEBI" id="CHEBI:57783"/>
        <dbReference type="ChEBI" id="CHEBI:58349"/>
        <dbReference type="ChEBI" id="CHEBI:60344"/>
        <dbReference type="EC" id="1.6.2.4"/>
    </reaction>
</comment>
<comment type="cofactor">
    <cofactor evidence="2">
        <name>FAD</name>
        <dbReference type="ChEBI" id="CHEBI:57692"/>
    </cofactor>
    <text evidence="2">Binds 1 FAD per monomer.</text>
</comment>
<comment type="cofactor">
    <cofactor evidence="2">
        <name>FMN</name>
        <dbReference type="ChEBI" id="CHEBI:58210"/>
    </cofactor>
    <text evidence="2">Binds 1 FMN per monomer.</text>
</comment>
<comment type="subcellular location">
    <subcellularLocation>
        <location evidence="2">Endoplasmic reticulum membrane</location>
        <topology evidence="2">Single-pass membrane protein</topology>
        <orientation evidence="2">Cytoplasmic side</orientation>
    </subcellularLocation>
</comment>
<comment type="similarity">
    <text evidence="2">Belongs to the NADPH--cytochrome P450 reductase family.</text>
</comment>
<comment type="similarity">
    <text evidence="2">In the N-terminal section; belongs to the flavodoxin family.</text>
</comment>
<comment type="similarity">
    <text evidence="2">In the C-terminal section; belongs to the flavoprotein pyridine nucleotide cytochrome reductase family.</text>
</comment>
<comment type="caution">
    <text evidence="3">Was originally thought to originate from mouse.</text>
</comment>
<organism>
    <name type="scientific">Cavia porcellus</name>
    <name type="common">Guinea pig</name>
    <dbReference type="NCBI Taxonomy" id="10141"/>
    <lineage>
        <taxon>Eukaryota</taxon>
        <taxon>Metazoa</taxon>
        <taxon>Chordata</taxon>
        <taxon>Craniata</taxon>
        <taxon>Vertebrata</taxon>
        <taxon>Euteleostomi</taxon>
        <taxon>Mammalia</taxon>
        <taxon>Eutheria</taxon>
        <taxon>Euarchontoglires</taxon>
        <taxon>Glires</taxon>
        <taxon>Rodentia</taxon>
        <taxon>Hystricomorpha</taxon>
        <taxon>Caviidae</taxon>
        <taxon>Cavia</taxon>
    </lineage>
</organism>
<evidence type="ECO:0000250" key="1">
    <source>
        <dbReference type="UniProtKB" id="P16435"/>
    </source>
</evidence>
<evidence type="ECO:0000255" key="2">
    <source>
        <dbReference type="HAMAP-Rule" id="MF_03212"/>
    </source>
</evidence>
<evidence type="ECO:0000305" key="3">
    <source>
    </source>
</evidence>
<reference key="1">
    <citation type="journal article" date="1992" name="Biochim. Biophys. Acta">
        <title>Molecular cloning and sequence analysis of guinea-pig NADPH-cytochrome P-450 oxidoreductase.</title>
        <authorList>
            <person name="Ohgiya S."/>
            <person name="Goda T."/>
            <person name="Ishizaki K."/>
            <person name="Kamataki T."/>
            <person name="Shinriki N."/>
        </authorList>
    </citation>
    <scope>NUCLEOTIDE SEQUENCE [MRNA]</scope>
    <source>
        <strain>Hartley</strain>
    </source>
</reference>
<reference key="2">
    <citation type="journal article" date="1993" name="Biochim. Biophys. Acta">
        <authorList>
            <person name="Ohgiya S."/>
            <person name="Goda T."/>
            <person name="Ishizaki K."/>
            <person name="Kamataki T."/>
            <person name="Shinriki N."/>
        </authorList>
    </citation>
    <scope>ERRATUM OF PUBMED:1420354</scope>
</reference>
<accession>P37039</accession>
<dbReference type="EC" id="1.6.2.4" evidence="2"/>
<dbReference type="EMBL" id="D10498">
    <property type="protein sequence ID" value="BAA01385.1"/>
    <property type="molecule type" value="mRNA"/>
</dbReference>
<dbReference type="PIR" id="S27158">
    <property type="entry name" value="S27158"/>
</dbReference>
<dbReference type="RefSeq" id="NP_001166473.1">
    <property type="nucleotide sequence ID" value="NM_001173002.1"/>
</dbReference>
<dbReference type="RefSeq" id="XP_013007952.2">
    <property type="nucleotide sequence ID" value="XM_013152498.3"/>
</dbReference>
<dbReference type="SMR" id="P37039"/>
<dbReference type="FunCoup" id="P37039">
    <property type="interactions" value="3219"/>
</dbReference>
<dbReference type="STRING" id="10141.ENSCPOP00000005592"/>
<dbReference type="GeneID" id="100135602"/>
<dbReference type="KEGG" id="cpoc:100135602"/>
<dbReference type="CTD" id="5447"/>
<dbReference type="eggNOG" id="KOG1158">
    <property type="taxonomic scope" value="Eukaryota"/>
</dbReference>
<dbReference type="InParanoid" id="P37039"/>
<dbReference type="OrthoDB" id="1856718at2759"/>
<dbReference type="Proteomes" id="UP000005447">
    <property type="component" value="Unassembled WGS sequence"/>
</dbReference>
<dbReference type="GO" id="GO:0005829">
    <property type="term" value="C:cytosol"/>
    <property type="evidence" value="ECO:0007669"/>
    <property type="project" value="TreeGrafter"/>
</dbReference>
<dbReference type="GO" id="GO:0005789">
    <property type="term" value="C:endoplasmic reticulum membrane"/>
    <property type="evidence" value="ECO:0007669"/>
    <property type="project" value="UniProtKB-SubCell"/>
</dbReference>
<dbReference type="GO" id="GO:0050660">
    <property type="term" value="F:flavin adenine dinucleotide binding"/>
    <property type="evidence" value="ECO:0007669"/>
    <property type="project" value="UniProtKB-UniRule"/>
</dbReference>
<dbReference type="GO" id="GO:0010181">
    <property type="term" value="F:FMN binding"/>
    <property type="evidence" value="ECO:0007669"/>
    <property type="project" value="UniProtKB-UniRule"/>
</dbReference>
<dbReference type="GO" id="GO:0050661">
    <property type="term" value="F:NADP binding"/>
    <property type="evidence" value="ECO:0007669"/>
    <property type="project" value="UniProtKB-UniRule"/>
</dbReference>
<dbReference type="GO" id="GO:0003958">
    <property type="term" value="F:NADPH-hemoprotein reductase activity"/>
    <property type="evidence" value="ECO:0007669"/>
    <property type="project" value="UniProtKB-UniRule"/>
</dbReference>
<dbReference type="GO" id="GO:0009725">
    <property type="term" value="P:response to hormone"/>
    <property type="evidence" value="ECO:0007669"/>
    <property type="project" value="TreeGrafter"/>
</dbReference>
<dbReference type="CDD" id="cd06204">
    <property type="entry name" value="CYPOR"/>
    <property type="match status" value="1"/>
</dbReference>
<dbReference type="FunFam" id="1.20.990.10:FF:000001">
    <property type="entry name" value="NADPH--cytochrome P450 reductase"/>
    <property type="match status" value="1"/>
</dbReference>
<dbReference type="FunFam" id="3.40.50.360:FF:000009">
    <property type="entry name" value="NADPH--cytochrome P450 reductase"/>
    <property type="match status" value="1"/>
</dbReference>
<dbReference type="FunFam" id="3.40.50.80:FF:000001">
    <property type="entry name" value="NADPH--cytochrome P450 reductase 1"/>
    <property type="match status" value="1"/>
</dbReference>
<dbReference type="Gene3D" id="3.40.50.360">
    <property type="match status" value="1"/>
</dbReference>
<dbReference type="Gene3D" id="1.20.990.10">
    <property type="entry name" value="NADPH-cytochrome p450 Reductase, Chain A, domain 3"/>
    <property type="match status" value="1"/>
</dbReference>
<dbReference type="Gene3D" id="3.40.50.80">
    <property type="entry name" value="Nucleotide-binding domain of ferredoxin-NADP reductase (FNR) module"/>
    <property type="match status" value="1"/>
</dbReference>
<dbReference type="Gene3D" id="2.40.30.10">
    <property type="entry name" value="Translation factors"/>
    <property type="match status" value="1"/>
</dbReference>
<dbReference type="HAMAP" id="MF_03212">
    <property type="entry name" value="NCPR"/>
    <property type="match status" value="1"/>
</dbReference>
<dbReference type="InterPro" id="IPR003097">
    <property type="entry name" value="CysJ-like_FAD-binding"/>
</dbReference>
<dbReference type="InterPro" id="IPR017927">
    <property type="entry name" value="FAD-bd_FR_type"/>
</dbReference>
<dbReference type="InterPro" id="IPR001094">
    <property type="entry name" value="Flavdoxin-like"/>
</dbReference>
<dbReference type="InterPro" id="IPR008254">
    <property type="entry name" value="Flavodoxin/NO_synth"/>
</dbReference>
<dbReference type="InterPro" id="IPR001709">
    <property type="entry name" value="Flavoprot_Pyr_Nucl_cyt_Rdtase"/>
</dbReference>
<dbReference type="InterPro" id="IPR029039">
    <property type="entry name" value="Flavoprotein-like_sf"/>
</dbReference>
<dbReference type="InterPro" id="IPR039261">
    <property type="entry name" value="FNR_nucleotide-bd"/>
</dbReference>
<dbReference type="InterPro" id="IPR023173">
    <property type="entry name" value="NADPH_Cyt_P450_Rdtase_alpha"/>
</dbReference>
<dbReference type="InterPro" id="IPR001433">
    <property type="entry name" value="OxRdtase_FAD/NAD-bd"/>
</dbReference>
<dbReference type="InterPro" id="IPR023208">
    <property type="entry name" value="P450R"/>
</dbReference>
<dbReference type="InterPro" id="IPR017938">
    <property type="entry name" value="Riboflavin_synthase-like_b-brl"/>
</dbReference>
<dbReference type="PANTHER" id="PTHR19384:SF17">
    <property type="entry name" value="NADPH--CYTOCHROME P450 REDUCTASE"/>
    <property type="match status" value="1"/>
</dbReference>
<dbReference type="PANTHER" id="PTHR19384">
    <property type="entry name" value="NITRIC OXIDE SYNTHASE-RELATED"/>
    <property type="match status" value="1"/>
</dbReference>
<dbReference type="Pfam" id="PF00667">
    <property type="entry name" value="FAD_binding_1"/>
    <property type="match status" value="1"/>
</dbReference>
<dbReference type="Pfam" id="PF00258">
    <property type="entry name" value="Flavodoxin_1"/>
    <property type="match status" value="1"/>
</dbReference>
<dbReference type="Pfam" id="PF00175">
    <property type="entry name" value="NAD_binding_1"/>
    <property type="match status" value="1"/>
</dbReference>
<dbReference type="PIRSF" id="PIRSF000208">
    <property type="entry name" value="P450R"/>
    <property type="match status" value="1"/>
</dbReference>
<dbReference type="PRINTS" id="PR00369">
    <property type="entry name" value="FLAVODOXIN"/>
</dbReference>
<dbReference type="PRINTS" id="PR00371">
    <property type="entry name" value="FPNCR"/>
</dbReference>
<dbReference type="SUPFAM" id="SSF52343">
    <property type="entry name" value="Ferredoxin reductase-like, C-terminal NADP-linked domain"/>
    <property type="match status" value="1"/>
</dbReference>
<dbReference type="SUPFAM" id="SSF52218">
    <property type="entry name" value="Flavoproteins"/>
    <property type="match status" value="1"/>
</dbReference>
<dbReference type="SUPFAM" id="SSF63380">
    <property type="entry name" value="Riboflavin synthase domain-like"/>
    <property type="match status" value="1"/>
</dbReference>
<dbReference type="PROSITE" id="PS51384">
    <property type="entry name" value="FAD_FR"/>
    <property type="match status" value="1"/>
</dbReference>
<dbReference type="PROSITE" id="PS50902">
    <property type="entry name" value="FLAVODOXIN_LIKE"/>
    <property type="match status" value="1"/>
</dbReference>
<keyword id="KW-0007">Acetylation</keyword>
<keyword id="KW-0256">Endoplasmic reticulum</keyword>
<keyword id="KW-0274">FAD</keyword>
<keyword id="KW-0285">Flavoprotein</keyword>
<keyword id="KW-0288">FMN</keyword>
<keyword id="KW-0472">Membrane</keyword>
<keyword id="KW-0521">NADP</keyword>
<keyword id="KW-0560">Oxidoreductase</keyword>
<keyword id="KW-0597">Phosphoprotein</keyword>
<keyword id="KW-1185">Reference proteome</keyword>
<keyword id="KW-0812">Transmembrane</keyword>
<keyword id="KW-1133">Transmembrane helix</keyword>
<feature type="initiator methionine" description="Removed" evidence="1">
    <location>
        <position position="1"/>
    </location>
</feature>
<feature type="chain" id="PRO_0000167595" description="NADPH--cytochrome P450 reductase">
    <location>
        <begin position="2"/>
        <end position="678"/>
    </location>
</feature>
<feature type="topological domain" description="Lumenal" evidence="2">
    <location>
        <begin position="2"/>
        <end position="21"/>
    </location>
</feature>
<feature type="transmembrane region" description="Helical" evidence="2">
    <location>
        <begin position="22"/>
        <end position="42"/>
    </location>
</feature>
<feature type="topological domain" description="Cytoplasmic" evidence="2">
    <location>
        <begin position="43"/>
        <end position="678"/>
    </location>
</feature>
<feature type="domain" description="Flavodoxin-like" evidence="2">
    <location>
        <begin position="80"/>
        <end position="224"/>
    </location>
</feature>
<feature type="domain" description="FAD-binding FR-type" evidence="2">
    <location>
        <begin position="279"/>
        <end position="521"/>
    </location>
</feature>
<feature type="binding site" evidence="2">
    <location>
        <begin position="86"/>
        <end position="91"/>
    </location>
    <ligand>
        <name>FMN</name>
        <dbReference type="ChEBI" id="CHEBI:58210"/>
    </ligand>
</feature>
<feature type="binding site" evidence="2">
    <location>
        <begin position="138"/>
        <end position="141"/>
    </location>
    <ligand>
        <name>FMN</name>
        <dbReference type="ChEBI" id="CHEBI:58210"/>
    </ligand>
</feature>
<feature type="binding site" evidence="2">
    <location>
        <begin position="173"/>
        <end position="182"/>
    </location>
    <ligand>
        <name>FMN</name>
        <dbReference type="ChEBI" id="CHEBI:58210"/>
    </ligand>
</feature>
<feature type="binding site" evidence="2">
    <location>
        <position position="208"/>
    </location>
    <ligand>
        <name>FMN</name>
        <dbReference type="ChEBI" id="CHEBI:58210"/>
    </ligand>
</feature>
<feature type="binding site" evidence="2">
    <location>
        <position position="298"/>
    </location>
    <ligand>
        <name>NADP(+)</name>
        <dbReference type="ChEBI" id="CHEBI:58349"/>
    </ligand>
</feature>
<feature type="binding site" evidence="2">
    <location>
        <position position="424"/>
    </location>
    <ligand>
        <name>FAD</name>
        <dbReference type="ChEBI" id="CHEBI:57692"/>
    </ligand>
</feature>
<feature type="binding site" evidence="2">
    <location>
        <begin position="454"/>
        <end position="457"/>
    </location>
    <ligand>
        <name>FAD</name>
        <dbReference type="ChEBI" id="CHEBI:57692"/>
    </ligand>
</feature>
<feature type="binding site" evidence="2">
    <location>
        <begin position="472"/>
        <end position="474"/>
    </location>
    <ligand>
        <name>FAD</name>
        <dbReference type="ChEBI" id="CHEBI:57692"/>
    </ligand>
</feature>
<feature type="binding site" evidence="2">
    <location>
        <position position="478"/>
    </location>
    <ligand>
        <name>FAD</name>
        <dbReference type="ChEBI" id="CHEBI:57692"/>
    </ligand>
</feature>
<feature type="binding site" evidence="2">
    <location>
        <begin position="488"/>
        <end position="491"/>
    </location>
    <ligand>
        <name>FAD</name>
        <dbReference type="ChEBI" id="CHEBI:57692"/>
    </ligand>
</feature>
<feature type="binding site" evidence="2">
    <location>
        <position position="535"/>
    </location>
    <ligand>
        <name>NADP(+)</name>
        <dbReference type="ChEBI" id="CHEBI:58349"/>
    </ligand>
</feature>
<feature type="binding site" evidence="2">
    <location>
        <begin position="596"/>
        <end position="597"/>
    </location>
    <ligand>
        <name>NADP(+)</name>
        <dbReference type="ChEBI" id="CHEBI:58349"/>
    </ligand>
</feature>
<feature type="binding site" evidence="2">
    <location>
        <begin position="602"/>
        <end position="606"/>
    </location>
    <ligand>
        <name>NADP(+)</name>
        <dbReference type="ChEBI" id="CHEBI:58349"/>
    </ligand>
</feature>
<feature type="binding site" evidence="2">
    <location>
        <position position="639"/>
    </location>
    <ligand>
        <name>NADP(+)</name>
        <dbReference type="ChEBI" id="CHEBI:58349"/>
    </ligand>
</feature>
<feature type="binding site" evidence="2">
    <location>
        <position position="677"/>
    </location>
    <ligand>
        <name>FAD</name>
        <dbReference type="ChEBI" id="CHEBI:57692"/>
    </ligand>
</feature>
<feature type="modified residue" description="N-acetylglycine" evidence="1">
    <location>
        <position position="2"/>
    </location>
</feature>
<feature type="modified residue" description="Phosphoserine" evidence="1">
    <location>
        <position position="63"/>
    </location>
</feature>